<proteinExistence type="evidence at protein level"/>
<sequence>MVNMKASMFLTFAGLVLLFVVCYASESEEKEFPKEMLSSIFAVDNDFKQEERDCAGYMRECKEKLCCSGYVCSSRWKWCVLPAPWRC</sequence>
<evidence type="ECO:0000250" key="1"/>
<evidence type="ECO:0000250" key="2">
    <source>
        <dbReference type="UniProtKB" id="B3FIS6"/>
    </source>
</evidence>
<evidence type="ECO:0000255" key="3"/>
<evidence type="ECO:0000269" key="4">
    <source>
    </source>
</evidence>
<evidence type="ECO:0000305" key="5"/>
<organism>
    <name type="scientific">Cyriopagopus hainanus</name>
    <name type="common">Chinese bird spider</name>
    <name type="synonym">Haplopelma hainanum</name>
    <dbReference type="NCBI Taxonomy" id="209901"/>
    <lineage>
        <taxon>Eukaryota</taxon>
        <taxon>Metazoa</taxon>
        <taxon>Ecdysozoa</taxon>
        <taxon>Arthropoda</taxon>
        <taxon>Chelicerata</taxon>
        <taxon>Arachnida</taxon>
        <taxon>Araneae</taxon>
        <taxon>Mygalomorphae</taxon>
        <taxon>Theraphosidae</taxon>
        <taxon>Haplopelma</taxon>
    </lineage>
</organism>
<protein>
    <recommendedName>
        <fullName>U3-theraphotoxin-Hhn1a 5</fullName>
        <shortName>U3-TRTX-Hhn1a</shortName>
    </recommendedName>
    <alternativeName>
        <fullName>Hainantoxin-VIII.5</fullName>
        <shortName>HNTX-VIII.5</shortName>
    </alternativeName>
    <alternativeName>
        <fullName>Peptide F4-27.90</fullName>
    </alternativeName>
</protein>
<keyword id="KW-0903">Direct protein sequencing</keyword>
<keyword id="KW-1015">Disulfide bond</keyword>
<keyword id="KW-0872">Ion channel impairing toxin</keyword>
<keyword id="KW-0960">Knottin</keyword>
<keyword id="KW-0964">Secreted</keyword>
<keyword id="KW-0732">Signal</keyword>
<keyword id="KW-0800">Toxin</keyword>
<reference key="1">
    <citation type="journal article" date="2010" name="J. Proteome Res.">
        <title>Molecular diversification of peptide toxins from the tarantula Haplopelma hainanum (Ornithoctonus hainana) venom based on transcriptomic, peptidomic, and genomic analyses.</title>
        <authorList>
            <person name="Tang X."/>
            <person name="Zhang Y."/>
            <person name="Hu W."/>
            <person name="Xu D."/>
            <person name="Tao H."/>
            <person name="Yang X."/>
            <person name="Li Y."/>
            <person name="Jiang L."/>
            <person name="Liang S."/>
        </authorList>
    </citation>
    <scope>NUCLEOTIDE SEQUENCE [LARGE SCALE MRNA]</scope>
    <scope>PROTEIN SEQUENCE OF 53-85</scope>
    <scope>IDENTIFICATION BY MASS SPECTROMETRY</scope>
    <source>
        <tissue>Venom</tissue>
        <tissue>Venom gland</tissue>
    </source>
</reference>
<dbReference type="EMBL" id="GU292925">
    <property type="protein sequence ID" value="ADB56741.1"/>
    <property type="molecule type" value="mRNA"/>
</dbReference>
<dbReference type="SMR" id="D2Y248"/>
<dbReference type="ArachnoServer" id="AS001531">
    <property type="toxin name" value="U3-theraphotoxin-Hhn1t"/>
</dbReference>
<dbReference type="GO" id="GO:0005576">
    <property type="term" value="C:extracellular region"/>
    <property type="evidence" value="ECO:0007669"/>
    <property type="project" value="UniProtKB-SubCell"/>
</dbReference>
<dbReference type="GO" id="GO:0008200">
    <property type="term" value="F:ion channel inhibitor activity"/>
    <property type="evidence" value="ECO:0007669"/>
    <property type="project" value="InterPro"/>
</dbReference>
<dbReference type="GO" id="GO:0090729">
    <property type="term" value="F:toxin activity"/>
    <property type="evidence" value="ECO:0007669"/>
    <property type="project" value="UniProtKB-KW"/>
</dbReference>
<dbReference type="InterPro" id="IPR011696">
    <property type="entry name" value="Huwentoxin-1"/>
</dbReference>
<dbReference type="InterPro" id="IPR013140">
    <property type="entry name" value="Huwentoxin_CS1"/>
</dbReference>
<dbReference type="Pfam" id="PF07740">
    <property type="entry name" value="Toxin_12"/>
    <property type="match status" value="1"/>
</dbReference>
<dbReference type="SUPFAM" id="SSF57059">
    <property type="entry name" value="omega toxin-like"/>
    <property type="match status" value="1"/>
</dbReference>
<dbReference type="PROSITE" id="PS60021">
    <property type="entry name" value="HWTX_1"/>
    <property type="match status" value="1"/>
</dbReference>
<name>H8A05_CYRHA</name>
<feature type="signal peptide" evidence="3">
    <location>
        <begin position="1"/>
        <end position="24"/>
    </location>
</feature>
<feature type="propeptide" id="PRO_0000400587" evidence="4">
    <location>
        <begin position="25"/>
        <end position="52"/>
    </location>
</feature>
<feature type="peptide" id="PRO_0000400588" description="U3-theraphotoxin-Hhn1a 5">
    <location>
        <begin position="53"/>
        <end position="87"/>
    </location>
</feature>
<feature type="disulfide bond" evidence="2">
    <location>
        <begin position="54"/>
        <end position="67"/>
    </location>
</feature>
<feature type="disulfide bond" evidence="2">
    <location>
        <begin position="61"/>
        <end position="72"/>
    </location>
</feature>
<feature type="disulfide bond" evidence="2">
    <location>
        <begin position="66"/>
        <end position="79"/>
    </location>
</feature>
<comment type="function">
    <text evidence="1">Ion channel inhibitor.</text>
</comment>
<comment type="subcellular location">
    <subcellularLocation>
        <location>Secreted</location>
    </subcellularLocation>
</comment>
<comment type="tissue specificity">
    <text>Expressed by the venom gland.</text>
</comment>
<comment type="domain">
    <text evidence="1">The presence of a 'disulfide through disulfide knot' structurally defines this protein as a knottin.</text>
</comment>
<comment type="similarity">
    <text evidence="5">Belongs to the neurotoxin 10 (Hwtx-1) family. 51 (Hntx-8) subfamily. Hntx-8 sub-subfamily.</text>
</comment>
<accession>D2Y248</accession>